<sequence>MSYNLTDPYEIARYIKEAKKSTPIKAYIEGDLSNCDFTNIEKFNSGDLYILFGESEEILVIIEKNKDKIKNCRIEQDRRKSAIPLLDMLKINARIEPGATIRDKVIIGENAVIMMGAVVNIGAEIGEGTMVDMNAVVGARGKLGKNVHLGAGAVVAGVLEPPSSDPCTIEDNVLIGANAVILEGVKIGKGSVVAAGSIVTTDVPENVVVAGAPAKIIKEVDVKTKDKTKLLDDLRK</sequence>
<feature type="chain" id="PRO_0000376647" description="2,3,4,5-tetrahydropyridine-2,6-dicarboxylate N-acetyltransferase">
    <location>
        <begin position="1"/>
        <end position="236"/>
    </location>
</feature>
<dbReference type="EC" id="2.3.1.89" evidence="1"/>
<dbReference type="EMBL" id="CP000727">
    <property type="protein sequence ID" value="ABS37855.1"/>
    <property type="molecule type" value="Genomic_DNA"/>
</dbReference>
<dbReference type="EMBL" id="AM412317">
    <property type="protein sequence ID" value="CAL84717.1"/>
    <property type="molecule type" value="Genomic_DNA"/>
</dbReference>
<dbReference type="RefSeq" id="YP_001255645.1">
    <property type="nucleotide sequence ID" value="NC_009495.1"/>
</dbReference>
<dbReference type="RefSeq" id="YP_001388884.1">
    <property type="nucleotide sequence ID" value="NC_009698.1"/>
</dbReference>
<dbReference type="SMR" id="A5I6N5"/>
<dbReference type="GeneID" id="5184971"/>
<dbReference type="KEGG" id="cbh:CLC_3065"/>
<dbReference type="KEGG" id="cbo:CBO3156"/>
<dbReference type="PATRIC" id="fig|413999.7.peg.3134"/>
<dbReference type="HOGENOM" id="CLU_103751_0_0_9"/>
<dbReference type="UniPathway" id="UPA00034">
    <property type="reaction ID" value="UER00022"/>
</dbReference>
<dbReference type="PRO" id="PR:A5I6N5"/>
<dbReference type="Proteomes" id="UP000001986">
    <property type="component" value="Chromosome"/>
</dbReference>
<dbReference type="GO" id="GO:0047200">
    <property type="term" value="F:tetrahydrodipicolinate N-acetyltransferase activity"/>
    <property type="evidence" value="ECO:0007669"/>
    <property type="project" value="UniProtKB-EC"/>
</dbReference>
<dbReference type="GO" id="GO:0019877">
    <property type="term" value="P:diaminopimelate biosynthetic process"/>
    <property type="evidence" value="ECO:0007669"/>
    <property type="project" value="UniProtKB-UniRule"/>
</dbReference>
<dbReference type="GO" id="GO:0009089">
    <property type="term" value="P:lysine biosynthetic process via diaminopimelate"/>
    <property type="evidence" value="ECO:0007669"/>
    <property type="project" value="UniProtKB-UniRule"/>
</dbReference>
<dbReference type="CDD" id="cd03350">
    <property type="entry name" value="LbH_THP_succinylT"/>
    <property type="match status" value="1"/>
</dbReference>
<dbReference type="Gene3D" id="2.160.10.10">
    <property type="entry name" value="Hexapeptide repeat proteins"/>
    <property type="match status" value="1"/>
</dbReference>
<dbReference type="Gene3D" id="3.30.70.250">
    <property type="entry name" value="Malonyl-CoA ACP transacylase, ACP-binding"/>
    <property type="match status" value="1"/>
</dbReference>
<dbReference type="HAMAP" id="MF_01691">
    <property type="entry name" value="DapH"/>
    <property type="match status" value="1"/>
</dbReference>
<dbReference type="InterPro" id="IPR019873">
    <property type="entry name" value="DapH"/>
</dbReference>
<dbReference type="InterPro" id="IPR013710">
    <property type="entry name" value="DapH_N"/>
</dbReference>
<dbReference type="InterPro" id="IPR001451">
    <property type="entry name" value="Hexapep"/>
</dbReference>
<dbReference type="InterPro" id="IPR018357">
    <property type="entry name" value="Hexapep_transf_CS"/>
</dbReference>
<dbReference type="InterPro" id="IPR050179">
    <property type="entry name" value="Trans_hexapeptide_repeat"/>
</dbReference>
<dbReference type="InterPro" id="IPR011004">
    <property type="entry name" value="Trimer_LpxA-like_sf"/>
</dbReference>
<dbReference type="NCBIfam" id="TIGR03532">
    <property type="entry name" value="DapD_Ac"/>
    <property type="match status" value="1"/>
</dbReference>
<dbReference type="PANTHER" id="PTHR43300:SF10">
    <property type="entry name" value="2,3,4,5-TETRAHYDROPYRIDINE-2,6-DICARBOXYLATE N-ACETYLTRANSFERASE"/>
    <property type="match status" value="1"/>
</dbReference>
<dbReference type="PANTHER" id="PTHR43300">
    <property type="entry name" value="ACETYLTRANSFERASE"/>
    <property type="match status" value="1"/>
</dbReference>
<dbReference type="Pfam" id="PF08503">
    <property type="entry name" value="DapH_N"/>
    <property type="match status" value="1"/>
</dbReference>
<dbReference type="Pfam" id="PF14602">
    <property type="entry name" value="Hexapep_2"/>
    <property type="match status" value="2"/>
</dbReference>
<dbReference type="SUPFAM" id="SSF51161">
    <property type="entry name" value="Trimeric LpxA-like enzymes"/>
    <property type="match status" value="1"/>
</dbReference>
<dbReference type="PROSITE" id="PS00101">
    <property type="entry name" value="HEXAPEP_TRANSFERASES"/>
    <property type="match status" value="1"/>
</dbReference>
<organism>
    <name type="scientific">Clostridium botulinum (strain Hall / ATCC 3502 / NCTC 13319 / Type A)</name>
    <dbReference type="NCBI Taxonomy" id="441771"/>
    <lineage>
        <taxon>Bacteria</taxon>
        <taxon>Bacillati</taxon>
        <taxon>Bacillota</taxon>
        <taxon>Clostridia</taxon>
        <taxon>Eubacteriales</taxon>
        <taxon>Clostridiaceae</taxon>
        <taxon>Clostridium</taxon>
    </lineage>
</organism>
<accession>A5I6N5</accession>
<accession>A7G7W9</accession>
<proteinExistence type="inferred from homology"/>
<comment type="function">
    <text evidence="1">Catalyzes the transfer of an acetyl group from acetyl-CoA to tetrahydrodipicolinate.</text>
</comment>
<comment type="catalytic activity">
    <reaction evidence="1">
        <text>(S)-2,3,4,5-tetrahydrodipicolinate + acetyl-CoA + H2O = L-2-acetamido-6-oxoheptanedioate + CoA</text>
        <dbReference type="Rhea" id="RHEA:13085"/>
        <dbReference type="ChEBI" id="CHEBI:15377"/>
        <dbReference type="ChEBI" id="CHEBI:16845"/>
        <dbReference type="ChEBI" id="CHEBI:57287"/>
        <dbReference type="ChEBI" id="CHEBI:57288"/>
        <dbReference type="ChEBI" id="CHEBI:58117"/>
        <dbReference type="EC" id="2.3.1.89"/>
    </reaction>
</comment>
<comment type="pathway">
    <text evidence="1">Amino-acid biosynthesis; L-lysine biosynthesis via DAP pathway; LL-2,6-diaminopimelate from (S)-tetrahydrodipicolinate (acetylase route): step 1/3.</text>
</comment>
<comment type="similarity">
    <text evidence="1">Belongs to the transferase hexapeptide repeat family. DapH subfamily.</text>
</comment>
<protein>
    <recommendedName>
        <fullName evidence="1">2,3,4,5-tetrahydropyridine-2,6-dicarboxylate N-acetyltransferase</fullName>
        <ecNumber evidence="1">2.3.1.89</ecNumber>
    </recommendedName>
    <alternativeName>
        <fullName evidence="1">Tetrahydrodipicolinate N-acetyltransferase</fullName>
        <shortName evidence="1">THP acetyltransferase</shortName>
        <shortName evidence="1">Tetrahydropicolinate acetylase</shortName>
    </alternativeName>
</protein>
<keyword id="KW-0012">Acyltransferase</keyword>
<keyword id="KW-0028">Amino-acid biosynthesis</keyword>
<keyword id="KW-0220">Diaminopimelate biosynthesis</keyword>
<keyword id="KW-0457">Lysine biosynthesis</keyword>
<keyword id="KW-1185">Reference proteome</keyword>
<keyword id="KW-0677">Repeat</keyword>
<keyword id="KW-0808">Transferase</keyword>
<reference key="1">
    <citation type="journal article" date="2007" name="Genome Res.">
        <title>Genome sequence of a proteolytic (Group I) Clostridium botulinum strain Hall A and comparative analysis of the clostridial genomes.</title>
        <authorList>
            <person name="Sebaihia M."/>
            <person name="Peck M.W."/>
            <person name="Minton N.P."/>
            <person name="Thomson N.R."/>
            <person name="Holden M.T.G."/>
            <person name="Mitchell W.J."/>
            <person name="Carter A.T."/>
            <person name="Bentley S.D."/>
            <person name="Mason D.R."/>
            <person name="Crossman L."/>
            <person name="Paul C.J."/>
            <person name="Ivens A."/>
            <person name="Wells-Bennik M.H.J."/>
            <person name="Davis I.J."/>
            <person name="Cerdeno-Tarraga A.M."/>
            <person name="Churcher C."/>
            <person name="Quail M.A."/>
            <person name="Chillingworth T."/>
            <person name="Feltwell T."/>
            <person name="Fraser A."/>
            <person name="Goodhead I."/>
            <person name="Hance Z."/>
            <person name="Jagels K."/>
            <person name="Larke N."/>
            <person name="Maddison M."/>
            <person name="Moule S."/>
            <person name="Mungall K."/>
            <person name="Norbertczak H."/>
            <person name="Rabbinowitsch E."/>
            <person name="Sanders M."/>
            <person name="Simmonds M."/>
            <person name="White B."/>
            <person name="Whithead S."/>
            <person name="Parkhill J."/>
        </authorList>
    </citation>
    <scope>NUCLEOTIDE SEQUENCE [LARGE SCALE GENOMIC DNA]</scope>
    <source>
        <strain>Hall / ATCC 3502 / NCTC 13319 / Type A</strain>
    </source>
</reference>
<reference key="2">
    <citation type="journal article" date="2007" name="PLoS ONE">
        <title>Analysis of the neurotoxin complex genes in Clostridium botulinum A1-A4 and B1 strains: BoNT/A3, /Ba4 and /B1 clusters are located within plasmids.</title>
        <authorList>
            <person name="Smith T.J."/>
            <person name="Hill K.K."/>
            <person name="Foley B.T."/>
            <person name="Detter J.C."/>
            <person name="Munk A.C."/>
            <person name="Bruce D.C."/>
            <person name="Doggett N.A."/>
            <person name="Smith L.A."/>
            <person name="Marks J.D."/>
            <person name="Xie G."/>
            <person name="Brettin T.S."/>
        </authorList>
    </citation>
    <scope>NUCLEOTIDE SEQUENCE [LARGE SCALE GENOMIC DNA]</scope>
    <source>
        <strain>Hall / ATCC 3502 / NCTC 13319 / Type A</strain>
    </source>
</reference>
<evidence type="ECO:0000255" key="1">
    <source>
        <dbReference type="HAMAP-Rule" id="MF_01691"/>
    </source>
</evidence>
<name>DAPH_CLOBH</name>
<gene>
    <name evidence="1" type="primary">dapH</name>
    <name type="ordered locus">CBO3156</name>
    <name type="ordered locus">CLC_3065</name>
</gene>